<accession>B1XF04</accession>
<keyword id="KW-0694">RNA-binding</keyword>
<keyword id="KW-0804">Transcription</keyword>
<keyword id="KW-0889">Transcription antitermination</keyword>
<keyword id="KW-0805">Transcription regulation</keyword>
<evidence type="ECO:0000255" key="1">
    <source>
        <dbReference type="HAMAP-Rule" id="MF_00073"/>
    </source>
</evidence>
<feature type="chain" id="PRO_1000092550" description="Transcription antitermination protein NusB">
    <location>
        <begin position="1"/>
        <end position="139"/>
    </location>
</feature>
<sequence>MKPAARRRARECAVQALYSWQLSQNDIADVEYQFLAEQDVKDVDVLYFRELLAGVATNTAYLDGLMKPYLSRLLEELGQVEKAVLRIALYELSKRSDVPYKVAINEAIELAKSFGAEDSHKFVNGVLDKAAPVIRPNKK</sequence>
<reference key="1">
    <citation type="journal article" date="2008" name="J. Bacteriol.">
        <title>The complete genome sequence of Escherichia coli DH10B: insights into the biology of a laboratory workhorse.</title>
        <authorList>
            <person name="Durfee T."/>
            <person name="Nelson R."/>
            <person name="Baldwin S."/>
            <person name="Plunkett G. III"/>
            <person name="Burland V."/>
            <person name="Mau B."/>
            <person name="Petrosino J.F."/>
            <person name="Qin X."/>
            <person name="Muzny D.M."/>
            <person name="Ayele M."/>
            <person name="Gibbs R.A."/>
            <person name="Csorgo B."/>
            <person name="Posfai G."/>
            <person name="Weinstock G.M."/>
            <person name="Blattner F.R."/>
        </authorList>
    </citation>
    <scope>NUCLEOTIDE SEQUENCE [LARGE SCALE GENOMIC DNA]</scope>
    <source>
        <strain>K12 / DH10B</strain>
    </source>
</reference>
<dbReference type="EMBL" id="CP000948">
    <property type="protein sequence ID" value="ACB01544.1"/>
    <property type="molecule type" value="Genomic_DNA"/>
</dbReference>
<dbReference type="RefSeq" id="WP_000801125.1">
    <property type="nucleotide sequence ID" value="NC_010473.1"/>
</dbReference>
<dbReference type="BMRB" id="B1XF04"/>
<dbReference type="SMR" id="B1XF04"/>
<dbReference type="GeneID" id="93777044"/>
<dbReference type="KEGG" id="ecd:ECDH10B_0372"/>
<dbReference type="HOGENOM" id="CLU_087843_4_1_6"/>
<dbReference type="GO" id="GO:0005829">
    <property type="term" value="C:cytosol"/>
    <property type="evidence" value="ECO:0007669"/>
    <property type="project" value="TreeGrafter"/>
</dbReference>
<dbReference type="GO" id="GO:0003723">
    <property type="term" value="F:RNA binding"/>
    <property type="evidence" value="ECO:0007669"/>
    <property type="project" value="UniProtKB-UniRule"/>
</dbReference>
<dbReference type="GO" id="GO:0006353">
    <property type="term" value="P:DNA-templated transcription termination"/>
    <property type="evidence" value="ECO:0007669"/>
    <property type="project" value="UniProtKB-UniRule"/>
</dbReference>
<dbReference type="GO" id="GO:0031564">
    <property type="term" value="P:transcription antitermination"/>
    <property type="evidence" value="ECO:0007669"/>
    <property type="project" value="UniProtKB-KW"/>
</dbReference>
<dbReference type="CDD" id="cd00619">
    <property type="entry name" value="Terminator_NusB"/>
    <property type="match status" value="1"/>
</dbReference>
<dbReference type="FunFam" id="1.10.940.10:FF:000001">
    <property type="entry name" value="Transcription antitermination factor NusB"/>
    <property type="match status" value="1"/>
</dbReference>
<dbReference type="Gene3D" id="1.10.940.10">
    <property type="entry name" value="NusB-like"/>
    <property type="match status" value="1"/>
</dbReference>
<dbReference type="HAMAP" id="MF_00073">
    <property type="entry name" value="NusB"/>
    <property type="match status" value="1"/>
</dbReference>
<dbReference type="InterPro" id="IPR035926">
    <property type="entry name" value="NusB-like_sf"/>
</dbReference>
<dbReference type="InterPro" id="IPR011605">
    <property type="entry name" value="NusB_fam"/>
</dbReference>
<dbReference type="InterPro" id="IPR006027">
    <property type="entry name" value="NusB_RsmB_TIM44"/>
</dbReference>
<dbReference type="NCBIfam" id="TIGR01951">
    <property type="entry name" value="nusB"/>
    <property type="match status" value="1"/>
</dbReference>
<dbReference type="PANTHER" id="PTHR11078:SF3">
    <property type="entry name" value="ANTITERMINATION NUSB DOMAIN-CONTAINING PROTEIN"/>
    <property type="match status" value="1"/>
</dbReference>
<dbReference type="PANTHER" id="PTHR11078">
    <property type="entry name" value="N UTILIZATION SUBSTANCE PROTEIN B-RELATED"/>
    <property type="match status" value="1"/>
</dbReference>
<dbReference type="Pfam" id="PF01029">
    <property type="entry name" value="NusB"/>
    <property type="match status" value="1"/>
</dbReference>
<dbReference type="SUPFAM" id="SSF48013">
    <property type="entry name" value="NusB-like"/>
    <property type="match status" value="1"/>
</dbReference>
<protein>
    <recommendedName>
        <fullName evidence="1">Transcription antitermination protein NusB</fullName>
    </recommendedName>
    <alternativeName>
        <fullName evidence="1">Antitermination factor NusB</fullName>
    </alternativeName>
</protein>
<organism>
    <name type="scientific">Escherichia coli (strain K12 / DH10B)</name>
    <dbReference type="NCBI Taxonomy" id="316385"/>
    <lineage>
        <taxon>Bacteria</taxon>
        <taxon>Pseudomonadati</taxon>
        <taxon>Pseudomonadota</taxon>
        <taxon>Gammaproteobacteria</taxon>
        <taxon>Enterobacterales</taxon>
        <taxon>Enterobacteriaceae</taxon>
        <taxon>Escherichia</taxon>
    </lineage>
</organism>
<name>NUSB_ECODH</name>
<comment type="function">
    <text evidence="1">Involved in transcription antitermination. Required for transcription of ribosomal RNA (rRNA) genes. Binds specifically to the boxA antiterminator sequence of the ribosomal RNA (rrn) operons.</text>
</comment>
<comment type="similarity">
    <text evidence="1">Belongs to the NusB family.</text>
</comment>
<gene>
    <name evidence="1" type="primary">nusB</name>
    <name type="ordered locus">ECDH10B_0372</name>
</gene>
<proteinExistence type="inferred from homology"/>